<reference key="1">
    <citation type="submission" date="2006-06" db="EMBL/GenBank/DDBJ databases">
        <title>Complete sequence of chromosome of Mycobacterium sp. MCS.</title>
        <authorList>
            <consortium name="US DOE Joint Genome Institute"/>
            <person name="Copeland A."/>
            <person name="Lucas S."/>
            <person name="Lapidus A."/>
            <person name="Barry K."/>
            <person name="Detter J.C."/>
            <person name="Glavina del Rio T."/>
            <person name="Hammon N."/>
            <person name="Israni S."/>
            <person name="Dalin E."/>
            <person name="Tice H."/>
            <person name="Pitluck S."/>
            <person name="Martinez M."/>
            <person name="Schmutz J."/>
            <person name="Larimer F."/>
            <person name="Land M."/>
            <person name="Hauser L."/>
            <person name="Kyrpides N."/>
            <person name="Kim E."/>
            <person name="Miller C.D."/>
            <person name="Hughes J.E."/>
            <person name="Anderson A.J."/>
            <person name="Sims R.C."/>
            <person name="Richardson P."/>
        </authorList>
    </citation>
    <scope>NUCLEOTIDE SEQUENCE [LARGE SCALE GENOMIC DNA]</scope>
    <source>
        <strain>MCS</strain>
    </source>
</reference>
<gene>
    <name evidence="1" type="primary">bioD</name>
    <name type="ordered locus">Mmcs_3076</name>
</gene>
<proteinExistence type="inferred from homology"/>
<keyword id="KW-0067">ATP-binding</keyword>
<keyword id="KW-0093">Biotin biosynthesis</keyword>
<keyword id="KW-0963">Cytoplasm</keyword>
<keyword id="KW-0436">Ligase</keyword>
<keyword id="KW-0460">Magnesium</keyword>
<keyword id="KW-0479">Metal-binding</keyword>
<keyword id="KW-0547">Nucleotide-binding</keyword>
<comment type="function">
    <text evidence="1">Catalyzes a mechanistically unusual reaction, the ATP-dependent insertion of CO2 between the N7 and N8 nitrogen atoms of 7,8-diaminopelargonic acid (DAPA, also called 7,8-diammoniononanoate) to form a ureido ring.</text>
</comment>
<comment type="catalytic activity">
    <reaction evidence="1">
        <text>(7R,8S)-7,8-diammoniononanoate + CO2 + ATP = (4R,5S)-dethiobiotin + ADP + phosphate + 3 H(+)</text>
        <dbReference type="Rhea" id="RHEA:15805"/>
        <dbReference type="ChEBI" id="CHEBI:15378"/>
        <dbReference type="ChEBI" id="CHEBI:16526"/>
        <dbReference type="ChEBI" id="CHEBI:30616"/>
        <dbReference type="ChEBI" id="CHEBI:43474"/>
        <dbReference type="ChEBI" id="CHEBI:149469"/>
        <dbReference type="ChEBI" id="CHEBI:149473"/>
        <dbReference type="ChEBI" id="CHEBI:456216"/>
        <dbReference type="EC" id="6.3.3.3"/>
    </reaction>
</comment>
<comment type="cofactor">
    <cofactor evidence="1">
        <name>Mg(2+)</name>
        <dbReference type="ChEBI" id="CHEBI:18420"/>
    </cofactor>
</comment>
<comment type="pathway">
    <text evidence="1">Cofactor biosynthesis; biotin biosynthesis; biotin from 7,8-diaminononanoate: step 1/2.</text>
</comment>
<comment type="subunit">
    <text evidence="1">Homodimer.</text>
</comment>
<comment type="subcellular location">
    <subcellularLocation>
        <location evidence="1">Cytoplasm</location>
    </subcellularLocation>
</comment>
<comment type="similarity">
    <text evidence="1">Belongs to the dethiobiotin synthetase family.</text>
</comment>
<feature type="chain" id="PRO_0000302528" description="ATP-dependent dethiobiotin synthetase BioD">
    <location>
        <begin position="1"/>
        <end position="229"/>
    </location>
</feature>
<feature type="active site" evidence="1">
    <location>
        <position position="37"/>
    </location>
</feature>
<feature type="binding site" evidence="1">
    <location>
        <begin position="12"/>
        <end position="17"/>
    </location>
    <ligand>
        <name>ATP</name>
        <dbReference type="ChEBI" id="CHEBI:30616"/>
    </ligand>
</feature>
<feature type="binding site" evidence="1">
    <location>
        <position position="16"/>
    </location>
    <ligand>
        <name>Mg(2+)</name>
        <dbReference type="ChEBI" id="CHEBI:18420"/>
    </ligand>
</feature>
<feature type="binding site" evidence="1">
    <location>
        <position position="41"/>
    </location>
    <ligand>
        <name>substrate</name>
    </ligand>
</feature>
<feature type="binding site" evidence="1">
    <location>
        <position position="53"/>
    </location>
    <ligand>
        <name>ATP</name>
        <dbReference type="ChEBI" id="CHEBI:30616"/>
    </ligand>
</feature>
<feature type="binding site" evidence="1">
    <location>
        <position position="53"/>
    </location>
    <ligand>
        <name>Mg(2+)</name>
        <dbReference type="ChEBI" id="CHEBI:18420"/>
    </ligand>
</feature>
<feature type="binding site" evidence="1">
    <location>
        <begin position="112"/>
        <end position="115"/>
    </location>
    <ligand>
        <name>ATP</name>
        <dbReference type="ChEBI" id="CHEBI:30616"/>
    </ligand>
</feature>
<feature type="binding site" evidence="1">
    <location>
        <position position="112"/>
    </location>
    <ligand>
        <name>Mg(2+)</name>
        <dbReference type="ChEBI" id="CHEBI:18420"/>
    </ligand>
</feature>
<feature type="binding site" evidence="1">
    <location>
        <begin position="201"/>
        <end position="203"/>
    </location>
    <ligand>
        <name>ATP</name>
        <dbReference type="ChEBI" id="CHEBI:30616"/>
    </ligand>
</feature>
<name>BIOD_MYCSS</name>
<dbReference type="EC" id="6.3.3.3" evidence="1"/>
<dbReference type="EMBL" id="CP000384">
    <property type="protein sequence ID" value="ABG09183.1"/>
    <property type="molecule type" value="Genomic_DNA"/>
</dbReference>
<dbReference type="SMR" id="Q1B7F1"/>
<dbReference type="KEGG" id="mmc:Mmcs_3076"/>
<dbReference type="HOGENOM" id="CLU_072551_1_0_11"/>
<dbReference type="BioCyc" id="MSP164756:G1G6O-3140-MONOMER"/>
<dbReference type="UniPathway" id="UPA00078">
    <property type="reaction ID" value="UER00161"/>
</dbReference>
<dbReference type="GO" id="GO:0005829">
    <property type="term" value="C:cytosol"/>
    <property type="evidence" value="ECO:0007669"/>
    <property type="project" value="TreeGrafter"/>
</dbReference>
<dbReference type="GO" id="GO:0005524">
    <property type="term" value="F:ATP binding"/>
    <property type="evidence" value="ECO:0007669"/>
    <property type="project" value="UniProtKB-UniRule"/>
</dbReference>
<dbReference type="GO" id="GO:0004141">
    <property type="term" value="F:dethiobiotin synthase activity"/>
    <property type="evidence" value="ECO:0007669"/>
    <property type="project" value="UniProtKB-UniRule"/>
</dbReference>
<dbReference type="GO" id="GO:0000287">
    <property type="term" value="F:magnesium ion binding"/>
    <property type="evidence" value="ECO:0007669"/>
    <property type="project" value="UniProtKB-UniRule"/>
</dbReference>
<dbReference type="GO" id="GO:0009102">
    <property type="term" value="P:biotin biosynthetic process"/>
    <property type="evidence" value="ECO:0007669"/>
    <property type="project" value="UniProtKB-UniRule"/>
</dbReference>
<dbReference type="CDD" id="cd03109">
    <property type="entry name" value="DTBS"/>
    <property type="match status" value="1"/>
</dbReference>
<dbReference type="Gene3D" id="3.40.50.300">
    <property type="entry name" value="P-loop containing nucleotide triphosphate hydrolases"/>
    <property type="match status" value="1"/>
</dbReference>
<dbReference type="HAMAP" id="MF_00336">
    <property type="entry name" value="BioD"/>
    <property type="match status" value="1"/>
</dbReference>
<dbReference type="InterPro" id="IPR004472">
    <property type="entry name" value="DTB_synth_BioD"/>
</dbReference>
<dbReference type="InterPro" id="IPR027417">
    <property type="entry name" value="P-loop_NTPase"/>
</dbReference>
<dbReference type="NCBIfam" id="TIGR00347">
    <property type="entry name" value="bioD"/>
    <property type="match status" value="1"/>
</dbReference>
<dbReference type="PANTHER" id="PTHR43210">
    <property type="entry name" value="DETHIOBIOTIN SYNTHETASE"/>
    <property type="match status" value="1"/>
</dbReference>
<dbReference type="PANTHER" id="PTHR43210:SF5">
    <property type="entry name" value="DETHIOBIOTIN SYNTHETASE"/>
    <property type="match status" value="1"/>
</dbReference>
<dbReference type="Pfam" id="PF13500">
    <property type="entry name" value="AAA_26"/>
    <property type="match status" value="1"/>
</dbReference>
<dbReference type="PIRSF" id="PIRSF006755">
    <property type="entry name" value="DTB_synth"/>
    <property type="match status" value="1"/>
</dbReference>
<dbReference type="SUPFAM" id="SSF52540">
    <property type="entry name" value="P-loop containing nucleoside triphosphate hydrolases"/>
    <property type="match status" value="1"/>
</dbReference>
<protein>
    <recommendedName>
        <fullName evidence="1">ATP-dependent dethiobiotin synthetase BioD</fullName>
        <ecNumber evidence="1">6.3.3.3</ecNumber>
    </recommendedName>
    <alternativeName>
        <fullName evidence="1">DTB synthetase</fullName>
        <shortName evidence="1">DTBS</shortName>
    </alternativeName>
    <alternativeName>
        <fullName evidence="1">Dethiobiotin synthase</fullName>
    </alternativeName>
</protein>
<organism>
    <name type="scientific">Mycobacterium sp. (strain MCS)</name>
    <dbReference type="NCBI Taxonomy" id="164756"/>
    <lineage>
        <taxon>Bacteria</taxon>
        <taxon>Bacillati</taxon>
        <taxon>Actinomycetota</taxon>
        <taxon>Actinomycetes</taxon>
        <taxon>Mycobacteriales</taxon>
        <taxon>Mycobacteriaceae</taxon>
        <taxon>Mycobacterium</taxon>
    </lineage>
</organism>
<evidence type="ECO:0000255" key="1">
    <source>
        <dbReference type="HAMAP-Rule" id="MF_00336"/>
    </source>
</evidence>
<sequence length="229" mass="22903">MSVLVITGTDTGVGKTVATAALACAARVAGIDVAVCKPVQTGTGPVGGTGDDDLVEIGRLAGVDALHPGWRYPDPLAPVAAAERAGAALPTRDELIGMVRAADAPGRLTLVEGAGGLLVELGQDAVTLRDVATELDAPVLVVVAPGLGTLNHTALTLESLAAQHVPCAGLVIGAWPAQPGAAEIDNRDTLARLAPVRAALPAGVGSVSPVDFERISATAFDPNWLAGLL</sequence>
<accession>Q1B7F1</accession>